<feature type="chain" id="PRO_1000184471" description="ATP synthase subunit c">
    <location>
        <begin position="1"/>
        <end position="83"/>
    </location>
</feature>
<feature type="transmembrane region" description="Helical" evidence="1">
    <location>
        <begin position="10"/>
        <end position="30"/>
    </location>
</feature>
<feature type="transmembrane region" description="Helical" evidence="1">
    <location>
        <begin position="52"/>
        <end position="72"/>
    </location>
</feature>
<feature type="site" description="Reversibly protonated during proton transport" evidence="1">
    <location>
        <position position="60"/>
    </location>
</feature>
<gene>
    <name evidence="1" type="primary">atpE</name>
    <name type="ordered locus">Sbal195_4512</name>
</gene>
<accession>A9KX11</accession>
<reference key="1">
    <citation type="submission" date="2007-11" db="EMBL/GenBank/DDBJ databases">
        <title>Complete sequence of chromosome of Shewanella baltica OS195.</title>
        <authorList>
            <consortium name="US DOE Joint Genome Institute"/>
            <person name="Copeland A."/>
            <person name="Lucas S."/>
            <person name="Lapidus A."/>
            <person name="Barry K."/>
            <person name="Glavina del Rio T."/>
            <person name="Dalin E."/>
            <person name="Tice H."/>
            <person name="Pitluck S."/>
            <person name="Chain P."/>
            <person name="Malfatti S."/>
            <person name="Shin M."/>
            <person name="Vergez L."/>
            <person name="Schmutz J."/>
            <person name="Larimer F."/>
            <person name="Land M."/>
            <person name="Hauser L."/>
            <person name="Kyrpides N."/>
            <person name="Kim E."/>
            <person name="Brettar I."/>
            <person name="Rodrigues J."/>
            <person name="Konstantinidis K."/>
            <person name="Klappenbach J."/>
            <person name="Hofle M."/>
            <person name="Tiedje J."/>
            <person name="Richardson P."/>
        </authorList>
    </citation>
    <scope>NUCLEOTIDE SEQUENCE [LARGE SCALE GENOMIC DNA]</scope>
    <source>
        <strain>OS195</strain>
    </source>
</reference>
<evidence type="ECO:0000255" key="1">
    <source>
        <dbReference type="HAMAP-Rule" id="MF_01396"/>
    </source>
</evidence>
<protein>
    <recommendedName>
        <fullName evidence="1">ATP synthase subunit c</fullName>
    </recommendedName>
    <alternativeName>
        <fullName evidence="1">ATP synthase F(0) sector subunit c</fullName>
    </alternativeName>
    <alternativeName>
        <fullName evidence="1">F-type ATPase subunit c</fullName>
        <shortName evidence="1">F-ATPase subunit c</shortName>
    </alternativeName>
    <alternativeName>
        <fullName evidence="1">Lipid-binding protein</fullName>
    </alternativeName>
</protein>
<dbReference type="EMBL" id="CP000891">
    <property type="protein sequence ID" value="ABX51669.1"/>
    <property type="molecule type" value="Genomic_DNA"/>
</dbReference>
<dbReference type="RefSeq" id="WP_006083840.1">
    <property type="nucleotide sequence ID" value="NC_009997.1"/>
</dbReference>
<dbReference type="SMR" id="A9KX11"/>
<dbReference type="GeneID" id="94725963"/>
<dbReference type="KEGG" id="sbn:Sbal195_4512"/>
<dbReference type="HOGENOM" id="CLU_148047_1_0_6"/>
<dbReference type="Proteomes" id="UP000000770">
    <property type="component" value="Chromosome"/>
</dbReference>
<dbReference type="GO" id="GO:0005886">
    <property type="term" value="C:plasma membrane"/>
    <property type="evidence" value="ECO:0007669"/>
    <property type="project" value="UniProtKB-SubCell"/>
</dbReference>
<dbReference type="GO" id="GO:0045259">
    <property type="term" value="C:proton-transporting ATP synthase complex"/>
    <property type="evidence" value="ECO:0007669"/>
    <property type="project" value="UniProtKB-KW"/>
</dbReference>
<dbReference type="GO" id="GO:0033177">
    <property type="term" value="C:proton-transporting two-sector ATPase complex, proton-transporting domain"/>
    <property type="evidence" value="ECO:0007669"/>
    <property type="project" value="InterPro"/>
</dbReference>
<dbReference type="GO" id="GO:0008289">
    <property type="term" value="F:lipid binding"/>
    <property type="evidence" value="ECO:0007669"/>
    <property type="project" value="UniProtKB-KW"/>
</dbReference>
<dbReference type="GO" id="GO:0046933">
    <property type="term" value="F:proton-transporting ATP synthase activity, rotational mechanism"/>
    <property type="evidence" value="ECO:0007669"/>
    <property type="project" value="UniProtKB-UniRule"/>
</dbReference>
<dbReference type="CDD" id="cd18185">
    <property type="entry name" value="ATP-synt_Fo_c_ATPE"/>
    <property type="match status" value="1"/>
</dbReference>
<dbReference type="FunFam" id="1.20.20.10:FF:000002">
    <property type="entry name" value="ATP synthase subunit c"/>
    <property type="match status" value="1"/>
</dbReference>
<dbReference type="Gene3D" id="1.20.20.10">
    <property type="entry name" value="F1F0 ATP synthase subunit C"/>
    <property type="match status" value="1"/>
</dbReference>
<dbReference type="HAMAP" id="MF_01396">
    <property type="entry name" value="ATP_synth_c_bact"/>
    <property type="match status" value="1"/>
</dbReference>
<dbReference type="InterPro" id="IPR005953">
    <property type="entry name" value="ATP_synth_csu_bac/chlpt"/>
</dbReference>
<dbReference type="InterPro" id="IPR000454">
    <property type="entry name" value="ATP_synth_F0_csu"/>
</dbReference>
<dbReference type="InterPro" id="IPR020537">
    <property type="entry name" value="ATP_synth_F0_csu_DDCD_BS"/>
</dbReference>
<dbReference type="InterPro" id="IPR038662">
    <property type="entry name" value="ATP_synth_F0_csu_sf"/>
</dbReference>
<dbReference type="InterPro" id="IPR002379">
    <property type="entry name" value="ATPase_proteolipid_c-like_dom"/>
</dbReference>
<dbReference type="InterPro" id="IPR035921">
    <property type="entry name" value="F/V-ATP_Csub_sf"/>
</dbReference>
<dbReference type="NCBIfam" id="TIGR01260">
    <property type="entry name" value="ATP_synt_c"/>
    <property type="match status" value="1"/>
</dbReference>
<dbReference type="NCBIfam" id="NF005363">
    <property type="entry name" value="PRK06876.1"/>
    <property type="match status" value="1"/>
</dbReference>
<dbReference type="Pfam" id="PF00137">
    <property type="entry name" value="ATP-synt_C"/>
    <property type="match status" value="1"/>
</dbReference>
<dbReference type="PRINTS" id="PR00124">
    <property type="entry name" value="ATPASEC"/>
</dbReference>
<dbReference type="SUPFAM" id="SSF81333">
    <property type="entry name" value="F1F0 ATP synthase subunit C"/>
    <property type="match status" value="1"/>
</dbReference>
<dbReference type="PROSITE" id="PS00605">
    <property type="entry name" value="ATPASE_C"/>
    <property type="match status" value="1"/>
</dbReference>
<organism>
    <name type="scientific">Shewanella baltica (strain OS195)</name>
    <dbReference type="NCBI Taxonomy" id="399599"/>
    <lineage>
        <taxon>Bacteria</taxon>
        <taxon>Pseudomonadati</taxon>
        <taxon>Pseudomonadota</taxon>
        <taxon>Gammaproteobacteria</taxon>
        <taxon>Alteromonadales</taxon>
        <taxon>Shewanellaceae</taxon>
        <taxon>Shewanella</taxon>
    </lineage>
</organism>
<name>ATPL_SHEB9</name>
<sequence>METILGMTAIAVALLIGMGALGTAIGFGLLGGKFLEGAARQPEMAPMLQVKMFIVAGLLDAVTMIGVGIALFMLFTNPLGAML</sequence>
<keyword id="KW-0066">ATP synthesis</keyword>
<keyword id="KW-0997">Cell inner membrane</keyword>
<keyword id="KW-1003">Cell membrane</keyword>
<keyword id="KW-0138">CF(0)</keyword>
<keyword id="KW-0375">Hydrogen ion transport</keyword>
<keyword id="KW-0406">Ion transport</keyword>
<keyword id="KW-0446">Lipid-binding</keyword>
<keyword id="KW-0472">Membrane</keyword>
<keyword id="KW-0812">Transmembrane</keyword>
<keyword id="KW-1133">Transmembrane helix</keyword>
<keyword id="KW-0813">Transport</keyword>
<proteinExistence type="inferred from homology"/>
<comment type="function">
    <text evidence="1">F(1)F(0) ATP synthase produces ATP from ADP in the presence of a proton or sodium gradient. F-type ATPases consist of two structural domains, F(1) containing the extramembraneous catalytic core and F(0) containing the membrane proton channel, linked together by a central stalk and a peripheral stalk. During catalysis, ATP synthesis in the catalytic domain of F(1) is coupled via a rotary mechanism of the central stalk subunits to proton translocation.</text>
</comment>
<comment type="function">
    <text evidence="1">Key component of the F(0) channel; it plays a direct role in translocation across the membrane. A homomeric c-ring of between 10-14 subunits forms the central stalk rotor element with the F(1) delta and epsilon subunits.</text>
</comment>
<comment type="subunit">
    <text evidence="1">F-type ATPases have 2 components, F(1) - the catalytic core - and F(0) - the membrane proton channel. F(1) has five subunits: alpha(3), beta(3), gamma(1), delta(1), epsilon(1). F(0) has three main subunits: a(1), b(2) and c(10-14). The alpha and beta chains form an alternating ring which encloses part of the gamma chain. F(1) is attached to F(0) by a central stalk formed by the gamma and epsilon chains, while a peripheral stalk is formed by the delta and b chains.</text>
</comment>
<comment type="subcellular location">
    <subcellularLocation>
        <location evidence="1">Cell inner membrane</location>
        <topology evidence="1">Multi-pass membrane protein</topology>
    </subcellularLocation>
</comment>
<comment type="similarity">
    <text evidence="1">Belongs to the ATPase C chain family.</text>
</comment>